<sequence>MPPLSESEFLALAGKELDRIEAAVEAAADAADADIEISRTGNVMELEFENGSKIIINSQAPMQELWVAARSGGFHFRRDGERWVDTRSGDELYAALSAYVSQQAEAALKLG</sequence>
<organism>
    <name type="scientific">Cupriavidus pinatubonensis (strain JMP 134 / LMG 1197)</name>
    <name type="common">Cupriavidus necator (strain JMP 134)</name>
    <dbReference type="NCBI Taxonomy" id="264198"/>
    <lineage>
        <taxon>Bacteria</taxon>
        <taxon>Pseudomonadati</taxon>
        <taxon>Pseudomonadota</taxon>
        <taxon>Betaproteobacteria</taxon>
        <taxon>Burkholderiales</taxon>
        <taxon>Burkholderiaceae</taxon>
        <taxon>Cupriavidus</taxon>
    </lineage>
</organism>
<feature type="chain" id="PRO_1000010948" description="Iron-sulfur cluster assembly protein CyaY">
    <location>
        <begin position="1"/>
        <end position="111"/>
    </location>
</feature>
<proteinExistence type="inferred from homology"/>
<keyword id="KW-0408">Iron</keyword>
<keyword id="KW-0479">Metal-binding</keyword>
<comment type="function">
    <text evidence="1">Involved in iron-sulfur (Fe-S) cluster assembly. May act as a regulator of Fe-S biogenesis.</text>
</comment>
<comment type="similarity">
    <text evidence="1">Belongs to the frataxin family.</text>
</comment>
<dbReference type="EMBL" id="CP000090">
    <property type="protein sequence ID" value="AAZ62497.1"/>
    <property type="molecule type" value="Genomic_DNA"/>
</dbReference>
<dbReference type="SMR" id="Q46WI6"/>
<dbReference type="STRING" id="264198.Reut_A3137"/>
<dbReference type="KEGG" id="reu:Reut_A3137"/>
<dbReference type="eggNOG" id="COG1965">
    <property type="taxonomic scope" value="Bacteria"/>
</dbReference>
<dbReference type="HOGENOM" id="CLU_080880_3_0_4"/>
<dbReference type="OrthoDB" id="285675at2"/>
<dbReference type="GO" id="GO:0005829">
    <property type="term" value="C:cytosol"/>
    <property type="evidence" value="ECO:0007669"/>
    <property type="project" value="TreeGrafter"/>
</dbReference>
<dbReference type="GO" id="GO:0008199">
    <property type="term" value="F:ferric iron binding"/>
    <property type="evidence" value="ECO:0007669"/>
    <property type="project" value="InterPro"/>
</dbReference>
<dbReference type="GO" id="GO:0008198">
    <property type="term" value="F:ferrous iron binding"/>
    <property type="evidence" value="ECO:0007669"/>
    <property type="project" value="TreeGrafter"/>
</dbReference>
<dbReference type="GO" id="GO:0016226">
    <property type="term" value="P:iron-sulfur cluster assembly"/>
    <property type="evidence" value="ECO:0007669"/>
    <property type="project" value="UniProtKB-UniRule"/>
</dbReference>
<dbReference type="Gene3D" id="3.30.920.10">
    <property type="entry name" value="Frataxin/CyaY"/>
    <property type="match status" value="1"/>
</dbReference>
<dbReference type="HAMAP" id="MF_00142">
    <property type="entry name" value="CyaY"/>
    <property type="match status" value="1"/>
</dbReference>
<dbReference type="InterPro" id="IPR047584">
    <property type="entry name" value="CyaY"/>
</dbReference>
<dbReference type="InterPro" id="IPR002908">
    <property type="entry name" value="Frataxin/CyaY"/>
</dbReference>
<dbReference type="InterPro" id="IPR036524">
    <property type="entry name" value="Frataxin/CyaY_sf"/>
</dbReference>
<dbReference type="InterPro" id="IPR020895">
    <property type="entry name" value="Frataxin_CS"/>
</dbReference>
<dbReference type="NCBIfam" id="TIGR03421">
    <property type="entry name" value="FeS_CyaY"/>
    <property type="match status" value="1"/>
</dbReference>
<dbReference type="PANTHER" id="PTHR16821">
    <property type="entry name" value="FRATAXIN"/>
    <property type="match status" value="1"/>
</dbReference>
<dbReference type="PANTHER" id="PTHR16821:SF2">
    <property type="entry name" value="FRATAXIN, MITOCHONDRIAL"/>
    <property type="match status" value="1"/>
</dbReference>
<dbReference type="Pfam" id="PF01491">
    <property type="entry name" value="Frataxin_Cyay"/>
    <property type="match status" value="1"/>
</dbReference>
<dbReference type="SMART" id="SM01219">
    <property type="entry name" value="Frataxin_Cyay"/>
    <property type="match status" value="1"/>
</dbReference>
<dbReference type="SUPFAM" id="SSF55387">
    <property type="entry name" value="Frataxin/Nqo15-like"/>
    <property type="match status" value="1"/>
</dbReference>
<dbReference type="PROSITE" id="PS01344">
    <property type="entry name" value="FRATAXIN_1"/>
    <property type="match status" value="1"/>
</dbReference>
<dbReference type="PROSITE" id="PS50810">
    <property type="entry name" value="FRATAXIN_2"/>
    <property type="match status" value="1"/>
</dbReference>
<gene>
    <name evidence="1" type="primary">cyaY</name>
    <name type="ordered locus">Reut_A3137</name>
</gene>
<name>CYAY_CUPPJ</name>
<evidence type="ECO:0000255" key="1">
    <source>
        <dbReference type="HAMAP-Rule" id="MF_00142"/>
    </source>
</evidence>
<accession>Q46WI6</accession>
<protein>
    <recommendedName>
        <fullName evidence="1">Iron-sulfur cluster assembly protein CyaY</fullName>
    </recommendedName>
</protein>
<reference key="1">
    <citation type="journal article" date="2010" name="PLoS ONE">
        <title>The complete multipartite genome sequence of Cupriavidus necator JMP134, a versatile pollutant degrader.</title>
        <authorList>
            <person name="Lykidis A."/>
            <person name="Perez-Pantoja D."/>
            <person name="Ledger T."/>
            <person name="Mavromatis K."/>
            <person name="Anderson I.J."/>
            <person name="Ivanova N.N."/>
            <person name="Hooper S.D."/>
            <person name="Lapidus A."/>
            <person name="Lucas S."/>
            <person name="Gonzalez B."/>
            <person name="Kyrpides N.C."/>
        </authorList>
    </citation>
    <scope>NUCLEOTIDE SEQUENCE [LARGE SCALE GENOMIC DNA]</scope>
    <source>
        <strain>JMP134 / LMG 1197</strain>
    </source>
</reference>